<sequence length="459" mass="49453">MSNRFAVILAAGKGTRMKSKLYKVLHPVCGKPMVQHVVDQVSQLGLQKLVTVVGHGAEMVQEQLGNVSEFALQAEQLGTAHAVDQAASVLANEEGTTLVICGDTPLITAETMEALLQQHKEAGAMATVLTAYIEEPAGYGRIVRNENGHVEKIVEHKDANEKELAIKEINTGTYCFDNKALFASLSKVSNDNVQGEYYLPDVIEILKNEGHIVSAYQTEHFDETLGVNDRVALSQAEIIMKNRINRKNMVNGVTIIDPSNTYISADAIIGSDTVLHPGTIIEGNTVIGSDCEIGPHTVIRDSEIGDRTTIRQSTVHDSKLGTEVSVGPFAHIRPDSVIGDEVRVGNFVEIKKTVFGNRSKASHLSYIGDAQVGEDVNLGCGSITVNYDGKNKFKTVIGNGVFIGCNSNLVAPVTVEDGAYVAAGSTITENVPSKALSVARARQVNKEDYVDQLLNKKKS</sequence>
<gene>
    <name evidence="1" type="primary">glmU</name>
    <name type="ordered locus">BCAH187_A0058</name>
</gene>
<proteinExistence type="inferred from homology"/>
<name>GLMU_BACC7</name>
<feature type="chain" id="PRO_1000186402" description="Bifunctional protein GlmU">
    <location>
        <begin position="1"/>
        <end position="459"/>
    </location>
</feature>
<feature type="region of interest" description="Pyrophosphorylase" evidence="1">
    <location>
        <begin position="1"/>
        <end position="230"/>
    </location>
</feature>
<feature type="region of interest" description="Linker" evidence="1">
    <location>
        <begin position="231"/>
        <end position="251"/>
    </location>
</feature>
<feature type="region of interest" description="N-acetyltransferase" evidence="1">
    <location>
        <begin position="252"/>
        <end position="459"/>
    </location>
</feature>
<feature type="active site" description="Proton acceptor" evidence="1">
    <location>
        <position position="363"/>
    </location>
</feature>
<feature type="binding site" evidence="1">
    <location>
        <begin position="9"/>
        <end position="12"/>
    </location>
    <ligand>
        <name>UDP-N-acetyl-alpha-D-glucosamine</name>
        <dbReference type="ChEBI" id="CHEBI:57705"/>
    </ligand>
</feature>
<feature type="binding site" evidence="1">
    <location>
        <position position="23"/>
    </location>
    <ligand>
        <name>UDP-N-acetyl-alpha-D-glucosamine</name>
        <dbReference type="ChEBI" id="CHEBI:57705"/>
    </ligand>
</feature>
<feature type="binding site" evidence="1">
    <location>
        <position position="73"/>
    </location>
    <ligand>
        <name>UDP-N-acetyl-alpha-D-glucosamine</name>
        <dbReference type="ChEBI" id="CHEBI:57705"/>
    </ligand>
</feature>
<feature type="binding site" evidence="1">
    <location>
        <begin position="78"/>
        <end position="79"/>
    </location>
    <ligand>
        <name>UDP-N-acetyl-alpha-D-glucosamine</name>
        <dbReference type="ChEBI" id="CHEBI:57705"/>
    </ligand>
</feature>
<feature type="binding site" evidence="1">
    <location>
        <position position="103"/>
    </location>
    <ligand>
        <name>Mg(2+)</name>
        <dbReference type="ChEBI" id="CHEBI:18420"/>
    </ligand>
</feature>
<feature type="binding site" evidence="1">
    <location>
        <position position="140"/>
    </location>
    <ligand>
        <name>UDP-N-acetyl-alpha-D-glucosamine</name>
        <dbReference type="ChEBI" id="CHEBI:57705"/>
    </ligand>
</feature>
<feature type="binding site" evidence="1">
    <location>
        <position position="155"/>
    </location>
    <ligand>
        <name>UDP-N-acetyl-alpha-D-glucosamine</name>
        <dbReference type="ChEBI" id="CHEBI:57705"/>
    </ligand>
</feature>
<feature type="binding site" evidence="1">
    <location>
        <position position="170"/>
    </location>
    <ligand>
        <name>UDP-N-acetyl-alpha-D-glucosamine</name>
        <dbReference type="ChEBI" id="CHEBI:57705"/>
    </ligand>
</feature>
<feature type="binding site" evidence="1">
    <location>
        <position position="228"/>
    </location>
    <ligand>
        <name>Mg(2+)</name>
        <dbReference type="ChEBI" id="CHEBI:18420"/>
    </ligand>
</feature>
<feature type="binding site" evidence="1">
    <location>
        <position position="228"/>
    </location>
    <ligand>
        <name>UDP-N-acetyl-alpha-D-glucosamine</name>
        <dbReference type="ChEBI" id="CHEBI:57705"/>
    </ligand>
</feature>
<feature type="binding site" evidence="1">
    <location>
        <position position="333"/>
    </location>
    <ligand>
        <name>UDP-N-acetyl-alpha-D-glucosamine</name>
        <dbReference type="ChEBI" id="CHEBI:57705"/>
    </ligand>
</feature>
<feature type="binding site" evidence="1">
    <location>
        <position position="351"/>
    </location>
    <ligand>
        <name>UDP-N-acetyl-alpha-D-glucosamine</name>
        <dbReference type="ChEBI" id="CHEBI:57705"/>
    </ligand>
</feature>
<feature type="binding site" evidence="1">
    <location>
        <position position="366"/>
    </location>
    <ligand>
        <name>UDP-N-acetyl-alpha-D-glucosamine</name>
        <dbReference type="ChEBI" id="CHEBI:57705"/>
    </ligand>
</feature>
<feature type="binding site" evidence="1">
    <location>
        <position position="377"/>
    </location>
    <ligand>
        <name>UDP-N-acetyl-alpha-D-glucosamine</name>
        <dbReference type="ChEBI" id="CHEBI:57705"/>
    </ligand>
</feature>
<feature type="binding site" evidence="1">
    <location>
        <begin position="386"/>
        <end position="387"/>
    </location>
    <ligand>
        <name>acetyl-CoA</name>
        <dbReference type="ChEBI" id="CHEBI:57288"/>
    </ligand>
</feature>
<feature type="binding site" evidence="1">
    <location>
        <position position="423"/>
    </location>
    <ligand>
        <name>acetyl-CoA</name>
        <dbReference type="ChEBI" id="CHEBI:57288"/>
    </ligand>
</feature>
<feature type="binding site" evidence="1">
    <location>
        <position position="440"/>
    </location>
    <ligand>
        <name>acetyl-CoA</name>
        <dbReference type="ChEBI" id="CHEBI:57288"/>
    </ligand>
</feature>
<organism>
    <name type="scientific">Bacillus cereus (strain AH187)</name>
    <dbReference type="NCBI Taxonomy" id="405534"/>
    <lineage>
        <taxon>Bacteria</taxon>
        <taxon>Bacillati</taxon>
        <taxon>Bacillota</taxon>
        <taxon>Bacilli</taxon>
        <taxon>Bacillales</taxon>
        <taxon>Bacillaceae</taxon>
        <taxon>Bacillus</taxon>
        <taxon>Bacillus cereus group</taxon>
    </lineage>
</organism>
<dbReference type="EC" id="2.7.7.23" evidence="1"/>
<dbReference type="EC" id="2.3.1.157" evidence="1"/>
<dbReference type="EMBL" id="CP001177">
    <property type="protein sequence ID" value="ACJ77443.1"/>
    <property type="molecule type" value="Genomic_DNA"/>
</dbReference>
<dbReference type="SMR" id="B7HPW0"/>
<dbReference type="KEGG" id="bcr:BCAH187_A0058"/>
<dbReference type="HOGENOM" id="CLU_029499_15_2_9"/>
<dbReference type="UniPathway" id="UPA00113">
    <property type="reaction ID" value="UER00532"/>
</dbReference>
<dbReference type="UniPathway" id="UPA00113">
    <property type="reaction ID" value="UER00533"/>
</dbReference>
<dbReference type="UniPathway" id="UPA00973"/>
<dbReference type="Proteomes" id="UP000002214">
    <property type="component" value="Chromosome"/>
</dbReference>
<dbReference type="GO" id="GO:0005737">
    <property type="term" value="C:cytoplasm"/>
    <property type="evidence" value="ECO:0007669"/>
    <property type="project" value="UniProtKB-SubCell"/>
</dbReference>
<dbReference type="GO" id="GO:0016020">
    <property type="term" value="C:membrane"/>
    <property type="evidence" value="ECO:0007669"/>
    <property type="project" value="GOC"/>
</dbReference>
<dbReference type="GO" id="GO:0019134">
    <property type="term" value="F:glucosamine-1-phosphate N-acetyltransferase activity"/>
    <property type="evidence" value="ECO:0007669"/>
    <property type="project" value="UniProtKB-UniRule"/>
</dbReference>
<dbReference type="GO" id="GO:0000287">
    <property type="term" value="F:magnesium ion binding"/>
    <property type="evidence" value="ECO:0007669"/>
    <property type="project" value="UniProtKB-UniRule"/>
</dbReference>
<dbReference type="GO" id="GO:0003977">
    <property type="term" value="F:UDP-N-acetylglucosamine diphosphorylase activity"/>
    <property type="evidence" value="ECO:0007669"/>
    <property type="project" value="UniProtKB-UniRule"/>
</dbReference>
<dbReference type="GO" id="GO:0000902">
    <property type="term" value="P:cell morphogenesis"/>
    <property type="evidence" value="ECO:0007669"/>
    <property type="project" value="UniProtKB-UniRule"/>
</dbReference>
<dbReference type="GO" id="GO:0071555">
    <property type="term" value="P:cell wall organization"/>
    <property type="evidence" value="ECO:0007669"/>
    <property type="project" value="UniProtKB-KW"/>
</dbReference>
<dbReference type="GO" id="GO:0009245">
    <property type="term" value="P:lipid A biosynthetic process"/>
    <property type="evidence" value="ECO:0007669"/>
    <property type="project" value="UniProtKB-UniRule"/>
</dbReference>
<dbReference type="GO" id="GO:0009252">
    <property type="term" value="P:peptidoglycan biosynthetic process"/>
    <property type="evidence" value="ECO:0007669"/>
    <property type="project" value="UniProtKB-UniRule"/>
</dbReference>
<dbReference type="GO" id="GO:0008360">
    <property type="term" value="P:regulation of cell shape"/>
    <property type="evidence" value="ECO:0007669"/>
    <property type="project" value="UniProtKB-KW"/>
</dbReference>
<dbReference type="GO" id="GO:0006048">
    <property type="term" value="P:UDP-N-acetylglucosamine biosynthetic process"/>
    <property type="evidence" value="ECO:0007669"/>
    <property type="project" value="UniProtKB-UniPathway"/>
</dbReference>
<dbReference type="CDD" id="cd02540">
    <property type="entry name" value="GT2_GlmU_N_bac"/>
    <property type="match status" value="1"/>
</dbReference>
<dbReference type="CDD" id="cd03353">
    <property type="entry name" value="LbH_GlmU_C"/>
    <property type="match status" value="1"/>
</dbReference>
<dbReference type="FunFam" id="2.160.10.10:FF:000016">
    <property type="entry name" value="Bifunctional protein GlmU"/>
    <property type="match status" value="1"/>
</dbReference>
<dbReference type="FunFam" id="3.90.550.10:FF:000006">
    <property type="entry name" value="Bifunctional protein GlmU"/>
    <property type="match status" value="1"/>
</dbReference>
<dbReference type="Gene3D" id="2.160.10.10">
    <property type="entry name" value="Hexapeptide repeat proteins"/>
    <property type="match status" value="1"/>
</dbReference>
<dbReference type="Gene3D" id="3.90.550.10">
    <property type="entry name" value="Spore Coat Polysaccharide Biosynthesis Protein SpsA, Chain A"/>
    <property type="match status" value="1"/>
</dbReference>
<dbReference type="HAMAP" id="MF_01631">
    <property type="entry name" value="GlmU"/>
    <property type="match status" value="1"/>
</dbReference>
<dbReference type="InterPro" id="IPR005882">
    <property type="entry name" value="Bifunctional_GlmU"/>
</dbReference>
<dbReference type="InterPro" id="IPR050065">
    <property type="entry name" value="GlmU-like"/>
</dbReference>
<dbReference type="InterPro" id="IPR038009">
    <property type="entry name" value="GlmU_C_LbH"/>
</dbReference>
<dbReference type="InterPro" id="IPR001451">
    <property type="entry name" value="Hexapep"/>
</dbReference>
<dbReference type="InterPro" id="IPR018357">
    <property type="entry name" value="Hexapep_transf_CS"/>
</dbReference>
<dbReference type="InterPro" id="IPR005835">
    <property type="entry name" value="NTP_transferase_dom"/>
</dbReference>
<dbReference type="InterPro" id="IPR029044">
    <property type="entry name" value="Nucleotide-diphossugar_trans"/>
</dbReference>
<dbReference type="InterPro" id="IPR011004">
    <property type="entry name" value="Trimer_LpxA-like_sf"/>
</dbReference>
<dbReference type="NCBIfam" id="TIGR01173">
    <property type="entry name" value="glmU"/>
    <property type="match status" value="1"/>
</dbReference>
<dbReference type="NCBIfam" id="NF010934">
    <property type="entry name" value="PRK14354.1"/>
    <property type="match status" value="1"/>
</dbReference>
<dbReference type="PANTHER" id="PTHR43584:SF3">
    <property type="entry name" value="BIFUNCTIONAL PROTEIN GLMU"/>
    <property type="match status" value="1"/>
</dbReference>
<dbReference type="PANTHER" id="PTHR43584">
    <property type="entry name" value="NUCLEOTIDYL TRANSFERASE"/>
    <property type="match status" value="1"/>
</dbReference>
<dbReference type="Pfam" id="PF00132">
    <property type="entry name" value="Hexapep"/>
    <property type="match status" value="3"/>
</dbReference>
<dbReference type="Pfam" id="PF00483">
    <property type="entry name" value="NTP_transferase"/>
    <property type="match status" value="1"/>
</dbReference>
<dbReference type="SUPFAM" id="SSF53448">
    <property type="entry name" value="Nucleotide-diphospho-sugar transferases"/>
    <property type="match status" value="1"/>
</dbReference>
<dbReference type="SUPFAM" id="SSF51161">
    <property type="entry name" value="Trimeric LpxA-like enzymes"/>
    <property type="match status" value="1"/>
</dbReference>
<dbReference type="PROSITE" id="PS00101">
    <property type="entry name" value="HEXAPEP_TRANSFERASES"/>
    <property type="match status" value="1"/>
</dbReference>
<evidence type="ECO:0000255" key="1">
    <source>
        <dbReference type="HAMAP-Rule" id="MF_01631"/>
    </source>
</evidence>
<protein>
    <recommendedName>
        <fullName evidence="1">Bifunctional protein GlmU</fullName>
    </recommendedName>
    <domain>
        <recommendedName>
            <fullName evidence="1">UDP-N-acetylglucosamine pyrophosphorylase</fullName>
            <ecNumber evidence="1">2.7.7.23</ecNumber>
        </recommendedName>
        <alternativeName>
            <fullName evidence="1">N-acetylglucosamine-1-phosphate uridyltransferase</fullName>
        </alternativeName>
    </domain>
    <domain>
        <recommendedName>
            <fullName evidence="1">Glucosamine-1-phosphate N-acetyltransferase</fullName>
            <ecNumber evidence="1">2.3.1.157</ecNumber>
        </recommendedName>
    </domain>
</protein>
<comment type="function">
    <text evidence="1">Catalyzes the last two sequential reactions in the de novo biosynthetic pathway for UDP-N-acetylglucosamine (UDP-GlcNAc). The C-terminal domain catalyzes the transfer of acetyl group from acetyl coenzyme A to glucosamine-1-phosphate (GlcN-1-P) to produce N-acetylglucosamine-1-phosphate (GlcNAc-1-P), which is converted into UDP-GlcNAc by the transfer of uridine 5-monophosphate (from uridine 5-triphosphate), a reaction catalyzed by the N-terminal domain.</text>
</comment>
<comment type="catalytic activity">
    <reaction evidence="1">
        <text>alpha-D-glucosamine 1-phosphate + acetyl-CoA = N-acetyl-alpha-D-glucosamine 1-phosphate + CoA + H(+)</text>
        <dbReference type="Rhea" id="RHEA:13725"/>
        <dbReference type="ChEBI" id="CHEBI:15378"/>
        <dbReference type="ChEBI" id="CHEBI:57287"/>
        <dbReference type="ChEBI" id="CHEBI:57288"/>
        <dbReference type="ChEBI" id="CHEBI:57776"/>
        <dbReference type="ChEBI" id="CHEBI:58516"/>
        <dbReference type="EC" id="2.3.1.157"/>
    </reaction>
</comment>
<comment type="catalytic activity">
    <reaction evidence="1">
        <text>N-acetyl-alpha-D-glucosamine 1-phosphate + UTP + H(+) = UDP-N-acetyl-alpha-D-glucosamine + diphosphate</text>
        <dbReference type="Rhea" id="RHEA:13509"/>
        <dbReference type="ChEBI" id="CHEBI:15378"/>
        <dbReference type="ChEBI" id="CHEBI:33019"/>
        <dbReference type="ChEBI" id="CHEBI:46398"/>
        <dbReference type="ChEBI" id="CHEBI:57705"/>
        <dbReference type="ChEBI" id="CHEBI:57776"/>
        <dbReference type="EC" id="2.7.7.23"/>
    </reaction>
</comment>
<comment type="cofactor">
    <cofactor evidence="1">
        <name>Mg(2+)</name>
        <dbReference type="ChEBI" id="CHEBI:18420"/>
    </cofactor>
    <text evidence="1">Binds 1 Mg(2+) ion per subunit.</text>
</comment>
<comment type="pathway">
    <text evidence="1">Nucleotide-sugar biosynthesis; UDP-N-acetyl-alpha-D-glucosamine biosynthesis; N-acetyl-alpha-D-glucosamine 1-phosphate from alpha-D-glucosamine 6-phosphate (route II): step 2/2.</text>
</comment>
<comment type="pathway">
    <text evidence="1">Nucleotide-sugar biosynthesis; UDP-N-acetyl-alpha-D-glucosamine biosynthesis; UDP-N-acetyl-alpha-D-glucosamine from N-acetyl-alpha-D-glucosamine 1-phosphate: step 1/1.</text>
</comment>
<comment type="pathway">
    <text evidence="1">Bacterial outer membrane biogenesis; LPS lipid A biosynthesis.</text>
</comment>
<comment type="subunit">
    <text evidence="1">Homotrimer.</text>
</comment>
<comment type="subcellular location">
    <subcellularLocation>
        <location evidence="1">Cytoplasm</location>
    </subcellularLocation>
</comment>
<comment type="similarity">
    <text evidence="1">In the N-terminal section; belongs to the N-acetylglucosamine-1-phosphate uridyltransferase family.</text>
</comment>
<comment type="similarity">
    <text evidence="1">In the C-terminal section; belongs to the transferase hexapeptide repeat family.</text>
</comment>
<reference key="1">
    <citation type="submission" date="2008-10" db="EMBL/GenBank/DDBJ databases">
        <title>Genome sequence of Bacillus cereus AH187.</title>
        <authorList>
            <person name="Dodson R.J."/>
            <person name="Durkin A.S."/>
            <person name="Rosovitz M.J."/>
            <person name="Rasko D.A."/>
            <person name="Kolsto A.B."/>
            <person name="Okstad O.A."/>
            <person name="Ravel J."/>
            <person name="Sutton G."/>
        </authorList>
    </citation>
    <scope>NUCLEOTIDE SEQUENCE [LARGE SCALE GENOMIC DNA]</scope>
    <source>
        <strain>AH187</strain>
    </source>
</reference>
<keyword id="KW-0012">Acyltransferase</keyword>
<keyword id="KW-0133">Cell shape</keyword>
<keyword id="KW-0961">Cell wall biogenesis/degradation</keyword>
<keyword id="KW-0963">Cytoplasm</keyword>
<keyword id="KW-0460">Magnesium</keyword>
<keyword id="KW-0479">Metal-binding</keyword>
<keyword id="KW-0511">Multifunctional enzyme</keyword>
<keyword id="KW-0548">Nucleotidyltransferase</keyword>
<keyword id="KW-0573">Peptidoglycan synthesis</keyword>
<keyword id="KW-0677">Repeat</keyword>
<keyword id="KW-0808">Transferase</keyword>
<accession>B7HPW0</accession>